<dbReference type="EMBL" id="CP000046">
    <property type="protein sequence ID" value="AAW37717.1"/>
    <property type="molecule type" value="Genomic_DNA"/>
</dbReference>
<dbReference type="RefSeq" id="WP_001060500.1">
    <property type="nucleotide sequence ID" value="NZ_JBGOFO010000009.1"/>
</dbReference>
<dbReference type="SMR" id="Q5HIB4"/>
<dbReference type="KEGG" id="sac:SACOL0608"/>
<dbReference type="HOGENOM" id="CLU_004137_1_2_9"/>
<dbReference type="PRO" id="PR:Q5HIB4"/>
<dbReference type="Proteomes" id="UP000000530">
    <property type="component" value="Chromosome"/>
</dbReference>
<dbReference type="GO" id="GO:0005576">
    <property type="term" value="C:extracellular region"/>
    <property type="evidence" value="ECO:0007669"/>
    <property type="project" value="UniProtKB-KW"/>
</dbReference>
<dbReference type="GO" id="GO:0007155">
    <property type="term" value="P:cell adhesion"/>
    <property type="evidence" value="ECO:0007669"/>
    <property type="project" value="InterPro"/>
</dbReference>
<dbReference type="Gene3D" id="2.60.40.1280">
    <property type="match status" value="1"/>
</dbReference>
<dbReference type="Gene3D" id="2.60.40.1290">
    <property type="match status" value="1"/>
</dbReference>
<dbReference type="Gene3D" id="2.60.40.10">
    <property type="entry name" value="Immunoglobulins"/>
    <property type="match status" value="2"/>
</dbReference>
<dbReference type="InterPro" id="IPR011266">
    <property type="entry name" value="Adhesin_Fg-bd_dom_2"/>
</dbReference>
<dbReference type="InterPro" id="IPR008966">
    <property type="entry name" value="Adhesion_dom_sf"/>
</dbReference>
<dbReference type="InterPro" id="IPR011252">
    <property type="entry name" value="Fibrogen-bd_dom1"/>
</dbReference>
<dbReference type="InterPro" id="IPR013783">
    <property type="entry name" value="Ig-like_fold"/>
</dbReference>
<dbReference type="InterPro" id="IPR019931">
    <property type="entry name" value="LPXTG_anchor"/>
</dbReference>
<dbReference type="InterPro" id="IPR050972">
    <property type="entry name" value="SDr-like"/>
</dbReference>
<dbReference type="InterPro" id="IPR033764">
    <property type="entry name" value="Sdr_B"/>
</dbReference>
<dbReference type="InterPro" id="IPR041171">
    <property type="entry name" value="SDR_Ig"/>
</dbReference>
<dbReference type="InterPro" id="IPR005877">
    <property type="entry name" value="YSIRK_signal_dom"/>
</dbReference>
<dbReference type="NCBIfam" id="TIGR01167">
    <property type="entry name" value="LPXTG_anchor"/>
    <property type="match status" value="1"/>
</dbReference>
<dbReference type="NCBIfam" id="NF000535">
    <property type="entry name" value="MSCRAMM_SdrC"/>
    <property type="match status" value="1"/>
</dbReference>
<dbReference type="NCBIfam" id="TIGR01168">
    <property type="entry name" value="YSIRK_signal"/>
    <property type="match status" value="1"/>
</dbReference>
<dbReference type="PANTHER" id="PTHR34403">
    <property type="entry name" value="TOL-PAL SYSTEM PROTEIN TOLA"/>
    <property type="match status" value="1"/>
</dbReference>
<dbReference type="PANTHER" id="PTHR34403:SF8">
    <property type="entry name" value="TOL-PAL SYSTEM PROTEIN TOLA"/>
    <property type="match status" value="1"/>
</dbReference>
<dbReference type="Pfam" id="PF17961">
    <property type="entry name" value="Big_8"/>
    <property type="match status" value="1"/>
</dbReference>
<dbReference type="Pfam" id="PF00746">
    <property type="entry name" value="Gram_pos_anchor"/>
    <property type="match status" value="1"/>
</dbReference>
<dbReference type="Pfam" id="PF17210">
    <property type="entry name" value="SdrD_B"/>
    <property type="match status" value="2"/>
</dbReference>
<dbReference type="Pfam" id="PF10425">
    <property type="entry name" value="SdrG_C_C"/>
    <property type="match status" value="1"/>
</dbReference>
<dbReference type="Pfam" id="PF04650">
    <property type="entry name" value="YSIRK_signal"/>
    <property type="match status" value="1"/>
</dbReference>
<dbReference type="SUPFAM" id="SSF49401">
    <property type="entry name" value="Bacterial adhesins"/>
    <property type="match status" value="2"/>
</dbReference>
<dbReference type="SUPFAM" id="SSF117074">
    <property type="entry name" value="Hypothetical protein PA1324"/>
    <property type="match status" value="2"/>
</dbReference>
<dbReference type="PROSITE" id="PS50847">
    <property type="entry name" value="GRAM_POS_ANCHORING"/>
    <property type="match status" value="1"/>
</dbReference>
<organism>
    <name type="scientific">Staphylococcus aureus (strain COL)</name>
    <dbReference type="NCBI Taxonomy" id="93062"/>
    <lineage>
        <taxon>Bacteria</taxon>
        <taxon>Bacillati</taxon>
        <taxon>Bacillota</taxon>
        <taxon>Bacilli</taxon>
        <taxon>Bacillales</taxon>
        <taxon>Staphylococcaceae</taxon>
        <taxon>Staphylococcus</taxon>
    </lineage>
</organism>
<evidence type="ECO:0000250" key="1">
    <source>
        <dbReference type="UniProtKB" id="O86487"/>
    </source>
</evidence>
<evidence type="ECO:0000255" key="2"/>
<evidence type="ECO:0000255" key="3">
    <source>
        <dbReference type="PROSITE-ProRule" id="PRU00477"/>
    </source>
</evidence>
<evidence type="ECO:0000256" key="4">
    <source>
        <dbReference type="SAM" id="MobiDB-lite"/>
    </source>
</evidence>
<evidence type="ECO:0000305" key="5"/>
<gene>
    <name type="primary">sdrC</name>
    <name type="ordered locus">SACOL0608</name>
</gene>
<keyword id="KW-0106">Calcium</keyword>
<keyword id="KW-0134">Cell wall</keyword>
<keyword id="KW-0572">Peptidoglycan-anchor</keyword>
<keyword id="KW-0677">Repeat</keyword>
<keyword id="KW-0964">Secreted</keyword>
<keyword id="KW-0732">Signal</keyword>
<protein>
    <recommendedName>
        <fullName>Serine-aspartate repeat-containing protein C</fullName>
    </recommendedName>
</protein>
<proteinExistence type="inferred from homology"/>
<name>SDRC_STAAC</name>
<sequence>MNNKKTATNRKGMIPNRLNKFSIRKYSVGTASILVGTTLIFGLSGHEAKAAEHTNGELNQSKNETTAPSENKTTKKVDSRQLKDNTQTATADQPKVTMSDSATVKETSSNMQSPQNATANQSTTKTSNVTTNDKSSTTYSNETDKSNLTQAKDVSTTPKTTTIKPRTLNRMAVNTVAAPQQGTNVNDKVHFSNIDIAIDKGHVNQTTGKTEFWATSSDVLKLKANYTIDDSVKEGDTFTFKYGQYFRPGSVRLPSQTQNLYNAQGNIIAKGIYDSTTNTTTYTFTNYVDQYTNVRGSFEQVAFAKRKNATTDKTAYKMEVTLGNDTYSEEIIVDYGNKKAQPLISSTNYINNEDLSRNMTAYVNQPKNTYTKQTFVTNLTGYKFNPNAKNFKIYEVTDQNQFVDSFTPDTSKLKDVTDQFDVIYSNDNKTATVDLMKGQTSSNKQYIIQQVAYPDNSSTDNGKIDYTLDTDKTKYSWSNSYSNVNGSSTANGDQKKYNLGDYVWEDTNKDGKQDANEKGIKGVYVILKDSNGKELDRTTTDENGKYQFTGLSNGTYSVEFSTPAGYTPTTANVGTDDAVDSDGLTTTGVIKDADNMTLDSGFYKTPKYSLGDYVWYDSNKDGKQDSTEKGIKGVKVTLQNEKGEVIGTTETDENGKYRFDNLDSGKYKVIFEKPAGLTQTGTNTTEDDKDADGGEVDVTITDHDDFTLDNGYYEEETSDSDSDSDSDSDSDSDSDSDSDSDSDSDSDSDSDSDSDSDSDSDSDSDSDSDSDSDSDSDSDSDSDSDSDSDSDSDSDSDSDSDSDSDSDSDSDSDSDSDSDSDSDSDSDSDSDSDSDSDSDSDSDSDSDSDSDSDSDSDSDSDSDSDSDSDSDSDSDNDSDSDSDSDSDAGKHTPAKPMSTVKDQHKTAKALPETGSENNNSNNGTLFGGLFAALGSLLLFGRRKKQNK</sequence>
<comment type="function">
    <text evidence="1">Cell surface-associated calcium-binding protein which plays an important role in adhesion and pathogenesis. Mediates interactions with components of the extracellular matrix such as host NRXN1 to promote bacterial adhesion.</text>
</comment>
<comment type="subunit">
    <text evidence="1">Homodimerizes; via N2-Domain. Interacts with host NRXN1; this interaction mediates bacterial attachment to host cells.</text>
</comment>
<comment type="subcellular location">
    <subcellularLocation>
        <location evidence="3">Secreted</location>
        <location evidence="3">Cell wall</location>
        <topology evidence="3">Peptidoglycan-anchor</topology>
    </subcellularLocation>
</comment>
<comment type="similarity">
    <text evidence="5">Belongs to the serine-aspartate repeat-containing protein (SDr) family.</text>
</comment>
<accession>Q5HIB4</accession>
<reference key="1">
    <citation type="journal article" date="2005" name="J. Bacteriol.">
        <title>Insights on evolution of virulence and resistance from the complete genome analysis of an early methicillin-resistant Staphylococcus aureus strain and a biofilm-producing methicillin-resistant Staphylococcus epidermidis strain.</title>
        <authorList>
            <person name="Gill S.R."/>
            <person name="Fouts D.E."/>
            <person name="Archer G.L."/>
            <person name="Mongodin E.F."/>
            <person name="DeBoy R.T."/>
            <person name="Ravel J."/>
            <person name="Paulsen I.T."/>
            <person name="Kolonay J.F."/>
            <person name="Brinkac L.M."/>
            <person name="Beanan M.J."/>
            <person name="Dodson R.J."/>
            <person name="Daugherty S.C."/>
            <person name="Madupu R."/>
            <person name="Angiuoli S.V."/>
            <person name="Durkin A.S."/>
            <person name="Haft D.H."/>
            <person name="Vamathevan J.J."/>
            <person name="Khouri H."/>
            <person name="Utterback T.R."/>
            <person name="Lee C."/>
            <person name="Dimitrov G."/>
            <person name="Jiang L."/>
            <person name="Qin H."/>
            <person name="Weidman J."/>
            <person name="Tran K."/>
            <person name="Kang K.H."/>
            <person name="Hance I.R."/>
            <person name="Nelson K.E."/>
            <person name="Fraser C.M."/>
        </authorList>
    </citation>
    <scope>NUCLEOTIDE SEQUENCE [LARGE SCALE GENOMIC DNA]</scope>
    <source>
        <strain>COL</strain>
    </source>
</reference>
<feature type="signal peptide" evidence="2">
    <location>
        <begin position="1"/>
        <end position="50"/>
    </location>
</feature>
<feature type="chain" id="PRO_0000281390" description="Serine-aspartate repeat-containing protein C">
    <location>
        <begin position="51"/>
        <end position="913"/>
    </location>
</feature>
<feature type="propeptide" id="PRO_0000281391" description="Removed by sortase" evidence="3">
    <location>
        <begin position="914"/>
        <end position="947"/>
    </location>
</feature>
<feature type="domain" description="CNA-B 1">
    <location>
        <begin position="496"/>
        <end position="606"/>
    </location>
</feature>
<feature type="domain" description="CNA-B 2">
    <location>
        <begin position="607"/>
        <end position="717"/>
    </location>
</feature>
<feature type="region of interest" description="Ligand binding A region">
    <location>
        <begin position="51"/>
        <end position="495"/>
    </location>
</feature>
<feature type="region of interest" description="Disordered" evidence="4">
    <location>
        <begin position="51"/>
        <end position="164"/>
    </location>
</feature>
<feature type="region of interest" description="Disordered" evidence="4">
    <location>
        <begin position="678"/>
        <end position="927"/>
    </location>
</feature>
<feature type="short sequence motif" description="LPXTG sorting signal" evidence="3">
    <location>
        <begin position="910"/>
        <end position="914"/>
    </location>
</feature>
<feature type="compositionally biased region" description="Polar residues" evidence="4">
    <location>
        <begin position="56"/>
        <end position="71"/>
    </location>
</feature>
<feature type="compositionally biased region" description="Basic and acidic residues" evidence="4">
    <location>
        <begin position="72"/>
        <end position="83"/>
    </location>
</feature>
<feature type="compositionally biased region" description="Polar residues" evidence="4">
    <location>
        <begin position="84"/>
        <end position="155"/>
    </location>
</feature>
<feature type="compositionally biased region" description="Acidic residues" evidence="4">
    <location>
        <begin position="685"/>
        <end position="695"/>
    </location>
</feature>
<feature type="compositionally biased region" description="Acidic residues" evidence="4">
    <location>
        <begin position="712"/>
        <end position="886"/>
    </location>
</feature>
<feature type="compositionally biased region" description="Low complexity" evidence="4">
    <location>
        <begin position="912"/>
        <end position="927"/>
    </location>
</feature>
<feature type="modified residue" description="Pentaglycyl murein peptidoglycan amidated threonine" evidence="3">
    <location>
        <position position="913"/>
    </location>
</feature>